<gene>
    <name type="primary">cul-5</name>
    <name type="ORF">ZK856.1</name>
</gene>
<protein>
    <recommendedName>
        <fullName>Cullin-5</fullName>
        <shortName>CUL-5</shortName>
    </recommendedName>
</protein>
<name>CUL5_CAEEL</name>
<sequence>MQFDEEWSKADPIVHALLHQKSVTPAAWQDLFYHVYKITSWVDDGPLKIRDILTRCINDYVHEANKRIRSLQTDGSLLIGYIKEWNRFYQQANILPLPFKKIDESSRRRSVPETPEESIRTVMLEKWNEIIFMNISEQLLVEALRLVKEERDGNIIDAQNVIGIRESFVALNDRAGEDPLLVYRQSFERQFIEQTTEYYKKICGNLLNELGVLEYMVYADKKLEEEQQRAKRYLEMNSPTSGKHMEKAVIALVESFEDTILAECSKLIASKDVERLQRLYRLIRRTRSGIDTVLKCIDTHIRTEGLNDMRNNAENLSTDPERYVQQLLLMFDKFSSLVREGFCDDARLLTARDKAFRAVVNDSSIFKTEMMNKKGRTLSVESKCAELLANYCDLLLRKTQLSKKLTSEEIDEKLNQVLLVLKYVENKDVFMRFHRAHLSRRLILEMSADQEKEEMMVTKLRECGMPSDAVNKLSRMLQDIELNKDMNSSFKKALTGTNNNKSIADSINMKVLNGGAWGRGGSERIRFSLPRELEDFVPEMEAFYKKQHNGRKLCWMHHWSSGTMVFGTANGGRFDLECTTFQMAVLFCFNDRAHDKISLETLRLATELPDAELNRTLLSLVAYPKMRYQILLCDVPSTTVTARDFTDSTKFLINHDFNVVKNGKSQQRGKVNLIGRLQLSLEANAEKEHESIVALRELRVQEGIVKILKTRKTYTLAQLTMELVEILKPLFIPNRKIIKEQIDWLIENKYMERRADDINTFVYIS</sequence>
<organism>
    <name type="scientific">Caenorhabditis elegans</name>
    <dbReference type="NCBI Taxonomy" id="6239"/>
    <lineage>
        <taxon>Eukaryota</taxon>
        <taxon>Metazoa</taxon>
        <taxon>Ecdysozoa</taxon>
        <taxon>Nematoda</taxon>
        <taxon>Chromadorea</taxon>
        <taxon>Rhabditida</taxon>
        <taxon>Rhabditina</taxon>
        <taxon>Rhabditomorpha</taxon>
        <taxon>Rhabditoidea</taxon>
        <taxon>Rhabditidae</taxon>
        <taxon>Peloderinae</taxon>
        <taxon>Caenorhabditis</taxon>
    </lineage>
</organism>
<dbReference type="EMBL" id="Z70783">
    <property type="protein sequence ID" value="CAA94852.2"/>
    <property type="molecule type" value="Genomic_DNA"/>
</dbReference>
<dbReference type="PIR" id="T28043">
    <property type="entry name" value="T28043"/>
</dbReference>
<dbReference type="RefSeq" id="NP_505616.2">
    <property type="nucleotide sequence ID" value="NM_073215.8"/>
</dbReference>
<dbReference type="SMR" id="Q23639"/>
<dbReference type="BioGRID" id="44444">
    <property type="interactions" value="4"/>
</dbReference>
<dbReference type="DIP" id="DIP-25847N"/>
<dbReference type="FunCoup" id="Q23639">
    <property type="interactions" value="2498"/>
</dbReference>
<dbReference type="IntAct" id="Q23639">
    <property type="interactions" value="2"/>
</dbReference>
<dbReference type="MINT" id="Q23639"/>
<dbReference type="STRING" id="6239.ZK856.1.1"/>
<dbReference type="iPTMnet" id="Q23639"/>
<dbReference type="PaxDb" id="6239-ZK856.1"/>
<dbReference type="PeptideAtlas" id="Q23639"/>
<dbReference type="EnsemblMetazoa" id="ZK856.1.1">
    <property type="protein sequence ID" value="ZK856.1.1"/>
    <property type="gene ID" value="WBGene00000840"/>
</dbReference>
<dbReference type="GeneID" id="179413"/>
<dbReference type="KEGG" id="cel:CELE_ZK856.1"/>
<dbReference type="UCSC" id="ZK856.1">
    <property type="organism name" value="c. elegans"/>
</dbReference>
<dbReference type="AGR" id="WB:WBGene00000840"/>
<dbReference type="CTD" id="179413"/>
<dbReference type="WormBase" id="ZK856.1">
    <property type="protein sequence ID" value="CE41096"/>
    <property type="gene ID" value="WBGene00000840"/>
    <property type="gene designation" value="cul-5"/>
</dbReference>
<dbReference type="eggNOG" id="KOG2285">
    <property type="taxonomic scope" value="Eukaryota"/>
</dbReference>
<dbReference type="GeneTree" id="ENSGT00940000169483"/>
<dbReference type="HOGENOM" id="CLU_004747_5_0_1"/>
<dbReference type="InParanoid" id="Q23639"/>
<dbReference type="OMA" id="FWINQQF"/>
<dbReference type="OrthoDB" id="27073at2759"/>
<dbReference type="PhylomeDB" id="Q23639"/>
<dbReference type="Reactome" id="R-CEL-8863795">
    <property type="pathway name" value="Downregulation of ERBB2 signaling"/>
</dbReference>
<dbReference type="Reactome" id="R-CEL-8951664">
    <property type="pathway name" value="Neddylation"/>
</dbReference>
<dbReference type="Reactome" id="R-CEL-983168">
    <property type="pathway name" value="Antigen processing: Ubiquitination &amp; Proteasome degradation"/>
</dbReference>
<dbReference type="UniPathway" id="UPA00143"/>
<dbReference type="PRO" id="PR:Q23639"/>
<dbReference type="Proteomes" id="UP000001940">
    <property type="component" value="Chromosome V"/>
</dbReference>
<dbReference type="Bgee" id="WBGene00000840">
    <property type="expression patterns" value="Expressed in germ line (C elegans) and 4 other cell types or tissues"/>
</dbReference>
<dbReference type="GO" id="GO:0031466">
    <property type="term" value="C:Cul5-RING ubiquitin ligase complex"/>
    <property type="evidence" value="ECO:0000318"/>
    <property type="project" value="GO_Central"/>
</dbReference>
<dbReference type="GO" id="GO:0019005">
    <property type="term" value="C:SCF ubiquitin ligase complex"/>
    <property type="evidence" value="ECO:0000318"/>
    <property type="project" value="GO_Central"/>
</dbReference>
<dbReference type="GO" id="GO:0030674">
    <property type="term" value="F:protein-macromolecule adaptor activity"/>
    <property type="evidence" value="ECO:0000318"/>
    <property type="project" value="GO_Central"/>
</dbReference>
<dbReference type="GO" id="GO:0031625">
    <property type="term" value="F:ubiquitin protein ligase binding"/>
    <property type="evidence" value="ECO:0000318"/>
    <property type="project" value="GO_Central"/>
</dbReference>
<dbReference type="GO" id="GO:0016567">
    <property type="term" value="P:protein ubiquitination"/>
    <property type="evidence" value="ECO:0000318"/>
    <property type="project" value="GO_Central"/>
</dbReference>
<dbReference type="GO" id="GO:0031146">
    <property type="term" value="P:SCF-dependent proteasomal ubiquitin-dependent protein catabolic process"/>
    <property type="evidence" value="ECO:0000318"/>
    <property type="project" value="GO_Central"/>
</dbReference>
<dbReference type="FunFam" id="1.20.1310.10:FF:000077">
    <property type="entry name" value="CRE-CUL-5 protein"/>
    <property type="match status" value="1"/>
</dbReference>
<dbReference type="FunFam" id="1.20.1310.10:FF:000009">
    <property type="entry name" value="Cullin 5"/>
    <property type="match status" value="1"/>
</dbReference>
<dbReference type="FunFam" id="1.20.1310.10:FF:000015">
    <property type="entry name" value="Cullin 5"/>
    <property type="match status" value="1"/>
</dbReference>
<dbReference type="FunFam" id="3.30.230.130:FF:000004">
    <property type="entry name" value="Cullin 5"/>
    <property type="match status" value="1"/>
</dbReference>
<dbReference type="Gene3D" id="1.20.1310.10">
    <property type="entry name" value="Cullin Repeats"/>
    <property type="match status" value="4"/>
</dbReference>
<dbReference type="Gene3D" id="3.30.230.130">
    <property type="entry name" value="Cullin, Chain C, Domain 2"/>
    <property type="match status" value="1"/>
</dbReference>
<dbReference type="Gene3D" id="1.10.10.10">
    <property type="entry name" value="Winged helix-like DNA-binding domain superfamily/Winged helix DNA-binding domain"/>
    <property type="match status" value="1"/>
</dbReference>
<dbReference type="InterPro" id="IPR045093">
    <property type="entry name" value="Cullin"/>
</dbReference>
<dbReference type="InterPro" id="IPR016157">
    <property type="entry name" value="Cullin_CS"/>
</dbReference>
<dbReference type="InterPro" id="IPR016158">
    <property type="entry name" value="Cullin_homology"/>
</dbReference>
<dbReference type="InterPro" id="IPR036317">
    <property type="entry name" value="Cullin_homology_sf"/>
</dbReference>
<dbReference type="InterPro" id="IPR001373">
    <property type="entry name" value="Cullin_N"/>
</dbReference>
<dbReference type="InterPro" id="IPR019559">
    <property type="entry name" value="Cullin_neddylation_domain"/>
</dbReference>
<dbReference type="InterPro" id="IPR016159">
    <property type="entry name" value="Cullin_repeat-like_dom_sf"/>
</dbReference>
<dbReference type="InterPro" id="IPR036388">
    <property type="entry name" value="WH-like_DNA-bd_sf"/>
</dbReference>
<dbReference type="InterPro" id="IPR036390">
    <property type="entry name" value="WH_DNA-bd_sf"/>
</dbReference>
<dbReference type="PANTHER" id="PTHR11932">
    <property type="entry name" value="CULLIN"/>
    <property type="match status" value="1"/>
</dbReference>
<dbReference type="Pfam" id="PF00888">
    <property type="entry name" value="Cullin"/>
    <property type="match status" value="1"/>
</dbReference>
<dbReference type="Pfam" id="PF10557">
    <property type="entry name" value="Cullin_Nedd8"/>
    <property type="match status" value="1"/>
</dbReference>
<dbReference type="SMART" id="SM00182">
    <property type="entry name" value="CULLIN"/>
    <property type="match status" value="1"/>
</dbReference>
<dbReference type="SMART" id="SM00884">
    <property type="entry name" value="Cullin_Nedd8"/>
    <property type="match status" value="1"/>
</dbReference>
<dbReference type="SUPFAM" id="SSF75632">
    <property type="entry name" value="Cullin homology domain"/>
    <property type="match status" value="1"/>
</dbReference>
<dbReference type="SUPFAM" id="SSF74788">
    <property type="entry name" value="Cullin repeat-like"/>
    <property type="match status" value="1"/>
</dbReference>
<dbReference type="SUPFAM" id="SSF46785">
    <property type="entry name" value="Winged helix' DNA-binding domain"/>
    <property type="match status" value="1"/>
</dbReference>
<dbReference type="PROSITE" id="PS01256">
    <property type="entry name" value="CULLIN_1"/>
    <property type="match status" value="1"/>
</dbReference>
<dbReference type="PROSITE" id="PS50069">
    <property type="entry name" value="CULLIN_2"/>
    <property type="match status" value="1"/>
</dbReference>
<comment type="function">
    <text evidence="5">Probable core component of cullin-based SCF-like E3 ubiquitin-protein ligase complexes which mediate the ubiquitination and subsequent proteasomal degradation of target proteins. In association with rbx-2 seems to be involved in meiotic cell cycle progression in the germline. Required for phosphorylation of the MAP kinase MPK-1 in the germline.</text>
</comment>
<comment type="pathway">
    <text>Protein modification; protein ubiquitination.</text>
</comment>
<comment type="subunit">
    <text evidence="5">Interacts with rbx-1 and rbx-2.</text>
</comment>
<comment type="PTM">
    <text evidence="2">Neddylated; which enhances the ubiquitination activity of SCF-like complex.</text>
</comment>
<comment type="similarity">
    <text evidence="4">Belongs to the cullin family.</text>
</comment>
<proteinExistence type="evidence at protein level"/>
<feature type="chain" id="PRO_0000119784" description="Cullin-5">
    <location>
        <begin position="1"/>
        <end position="765"/>
    </location>
</feature>
<feature type="domain" description="Cullin neddylation" evidence="3">
    <location>
        <begin position="696"/>
        <end position="757"/>
    </location>
</feature>
<feature type="cross-link" description="Glycyl lysine isopeptide (Lys-Gly) (interchain with G-Cter in NEDD8)" evidence="1">
    <location>
        <position position="709"/>
    </location>
</feature>
<accession>Q23639</accession>
<keyword id="KW-1017">Isopeptide bond</keyword>
<keyword id="KW-1185">Reference proteome</keyword>
<keyword id="KW-0832">Ubl conjugation</keyword>
<keyword id="KW-0833">Ubl conjugation pathway</keyword>
<reference key="1">
    <citation type="journal article" date="1998" name="Science">
        <title>Genome sequence of the nematode C. elegans: a platform for investigating biology.</title>
        <authorList>
            <consortium name="The C. elegans sequencing consortium"/>
        </authorList>
    </citation>
    <scope>NUCLEOTIDE SEQUENCE [LARGE SCALE GENOMIC DNA]</scope>
    <source>
        <strain>Bristol N2</strain>
    </source>
</reference>
<reference key="2">
    <citation type="journal article" date="2007" name="FEBS Lett.">
        <title>C. elegans RBX-2-CUL-5- and RBX-1-CUL-2-based complexes are redundant for oogenesis and activation of the MAP kinase MPK-1.</title>
        <authorList>
            <person name="Sasagawa Y."/>
            <person name="Sato S."/>
            <person name="Ogura T."/>
            <person name="Higashitani A."/>
        </authorList>
    </citation>
    <scope>FUNCTION</scope>
    <scope>INTERACTION WITH RBX-1 AND RBX-2</scope>
</reference>
<evidence type="ECO:0000250" key="1">
    <source>
        <dbReference type="UniProtKB" id="Q13616"/>
    </source>
</evidence>
<evidence type="ECO:0000250" key="2">
    <source>
        <dbReference type="UniProtKB" id="Q93034"/>
    </source>
</evidence>
<evidence type="ECO:0000255" key="3"/>
<evidence type="ECO:0000255" key="4">
    <source>
        <dbReference type="PROSITE-ProRule" id="PRU00330"/>
    </source>
</evidence>
<evidence type="ECO:0000269" key="5">
    <source>
    </source>
</evidence>